<sequence>MRVNVTLACTECGDRNYISTKNKRTNPERVEMKKYCSRDNKHTLHRETK</sequence>
<evidence type="ECO:0000255" key="1">
    <source>
        <dbReference type="HAMAP-Rule" id="MF_00294"/>
    </source>
</evidence>
<organism>
    <name type="scientific">Staphylococcus haemolyticus (strain JCSC1435)</name>
    <dbReference type="NCBI Taxonomy" id="279808"/>
    <lineage>
        <taxon>Bacteria</taxon>
        <taxon>Bacillati</taxon>
        <taxon>Bacillota</taxon>
        <taxon>Bacilli</taxon>
        <taxon>Bacillales</taxon>
        <taxon>Staphylococcaceae</taxon>
        <taxon>Staphylococcus</taxon>
    </lineage>
</organism>
<feature type="chain" id="PRO_0000356699" description="Large ribosomal subunit protein bL33A">
    <location>
        <begin position="1"/>
        <end position="49"/>
    </location>
</feature>
<reference key="1">
    <citation type="journal article" date="2005" name="J. Bacteriol.">
        <title>Whole-genome sequencing of Staphylococcus haemolyticus uncovers the extreme plasticity of its genome and the evolution of human-colonizing staphylococcal species.</title>
        <authorList>
            <person name="Takeuchi F."/>
            <person name="Watanabe S."/>
            <person name="Baba T."/>
            <person name="Yuzawa H."/>
            <person name="Ito T."/>
            <person name="Morimoto Y."/>
            <person name="Kuroda M."/>
            <person name="Cui L."/>
            <person name="Takahashi M."/>
            <person name="Ankai A."/>
            <person name="Baba S."/>
            <person name="Fukui S."/>
            <person name="Lee J.C."/>
            <person name="Hiramatsu K."/>
        </authorList>
    </citation>
    <scope>NUCLEOTIDE SEQUENCE [LARGE SCALE GENOMIC DNA]</scope>
    <source>
        <strain>JCSC1435</strain>
    </source>
</reference>
<comment type="similarity">
    <text evidence="1">Belongs to the bacterial ribosomal protein bL33 family.</text>
</comment>
<dbReference type="EMBL" id="AP006716">
    <property type="protein sequence ID" value="BAE04674.1"/>
    <property type="molecule type" value="Genomic_DNA"/>
</dbReference>
<dbReference type="SMR" id="Q4L6Q1"/>
<dbReference type="KEGG" id="sha:SH1365"/>
<dbReference type="eggNOG" id="COG0267">
    <property type="taxonomic scope" value="Bacteria"/>
</dbReference>
<dbReference type="HOGENOM" id="CLU_190949_0_2_9"/>
<dbReference type="OrthoDB" id="197660at2"/>
<dbReference type="Proteomes" id="UP000000543">
    <property type="component" value="Chromosome"/>
</dbReference>
<dbReference type="GO" id="GO:0005737">
    <property type="term" value="C:cytoplasm"/>
    <property type="evidence" value="ECO:0007669"/>
    <property type="project" value="UniProtKB-ARBA"/>
</dbReference>
<dbReference type="GO" id="GO:1990904">
    <property type="term" value="C:ribonucleoprotein complex"/>
    <property type="evidence" value="ECO:0007669"/>
    <property type="project" value="UniProtKB-KW"/>
</dbReference>
<dbReference type="GO" id="GO:0005840">
    <property type="term" value="C:ribosome"/>
    <property type="evidence" value="ECO:0007669"/>
    <property type="project" value="UniProtKB-KW"/>
</dbReference>
<dbReference type="GO" id="GO:0003735">
    <property type="term" value="F:structural constituent of ribosome"/>
    <property type="evidence" value="ECO:0007669"/>
    <property type="project" value="InterPro"/>
</dbReference>
<dbReference type="GO" id="GO:0006412">
    <property type="term" value="P:translation"/>
    <property type="evidence" value="ECO:0007669"/>
    <property type="project" value="UniProtKB-UniRule"/>
</dbReference>
<dbReference type="Gene3D" id="2.20.28.120">
    <property type="entry name" value="Ribosomal protein L33"/>
    <property type="match status" value="1"/>
</dbReference>
<dbReference type="HAMAP" id="MF_00294">
    <property type="entry name" value="Ribosomal_bL33"/>
    <property type="match status" value="1"/>
</dbReference>
<dbReference type="InterPro" id="IPR001705">
    <property type="entry name" value="Ribosomal_bL33"/>
</dbReference>
<dbReference type="InterPro" id="IPR018264">
    <property type="entry name" value="Ribosomal_bL33_CS"/>
</dbReference>
<dbReference type="InterPro" id="IPR038584">
    <property type="entry name" value="Ribosomal_bL33_sf"/>
</dbReference>
<dbReference type="InterPro" id="IPR011332">
    <property type="entry name" value="Ribosomal_zn-bd"/>
</dbReference>
<dbReference type="NCBIfam" id="NF001764">
    <property type="entry name" value="PRK00504.1"/>
    <property type="match status" value="1"/>
</dbReference>
<dbReference type="NCBIfam" id="NF001860">
    <property type="entry name" value="PRK00595.1"/>
    <property type="match status" value="1"/>
</dbReference>
<dbReference type="NCBIfam" id="TIGR01023">
    <property type="entry name" value="rpmG_bact"/>
    <property type="match status" value="1"/>
</dbReference>
<dbReference type="PANTHER" id="PTHR43168">
    <property type="entry name" value="50S RIBOSOMAL PROTEIN L33, CHLOROPLASTIC"/>
    <property type="match status" value="1"/>
</dbReference>
<dbReference type="PANTHER" id="PTHR43168:SF2">
    <property type="entry name" value="LARGE RIBOSOMAL SUBUNIT PROTEIN BL33C"/>
    <property type="match status" value="1"/>
</dbReference>
<dbReference type="Pfam" id="PF00471">
    <property type="entry name" value="Ribosomal_L33"/>
    <property type="match status" value="1"/>
</dbReference>
<dbReference type="SUPFAM" id="SSF57829">
    <property type="entry name" value="Zn-binding ribosomal proteins"/>
    <property type="match status" value="1"/>
</dbReference>
<dbReference type="PROSITE" id="PS00582">
    <property type="entry name" value="RIBOSOMAL_L33"/>
    <property type="match status" value="1"/>
</dbReference>
<name>RL331_STAHJ</name>
<keyword id="KW-0687">Ribonucleoprotein</keyword>
<keyword id="KW-0689">Ribosomal protein</keyword>
<protein>
    <recommendedName>
        <fullName evidence="1">Large ribosomal subunit protein bL33A</fullName>
    </recommendedName>
    <alternativeName>
        <fullName evidence="1">50S ribosomal protein L33 1</fullName>
    </alternativeName>
</protein>
<accession>Q4L6Q1</accession>
<proteinExistence type="inferred from homology"/>
<gene>
    <name evidence="1" type="primary">rpmG1</name>
    <name type="ordered locus">SH1365</name>
</gene>